<gene>
    <name evidence="4" type="primary">ZWF1</name>
    <name type="ORF">AWRI3580_g7</name>
</gene>
<comment type="function">
    <text evidence="3">Catalyzes the rate-limiting step of the oxidative pentose-phosphate pathway, which represents a route for the dissimilation of carbohydrates besides glycolysis. The main function of this enzyme is to provide reducing power (NADPH) and pentose phosphates for fatty acid and nucleic acid synthesis (PubMed:38397078). The G6PDH activity is required to cope with hydrogen peroxide and potassium bisulfite stresses and plays a role in adaptation to conditions used in wine fermentations (PubMed:38397078).</text>
</comment>
<comment type="catalytic activity">
    <reaction evidence="3">
        <text>D-glucose 6-phosphate + NADP(+) = 6-phospho-D-glucono-1,5-lactone + NADPH + H(+)</text>
        <dbReference type="Rhea" id="RHEA:15841"/>
        <dbReference type="ChEBI" id="CHEBI:15378"/>
        <dbReference type="ChEBI" id="CHEBI:57783"/>
        <dbReference type="ChEBI" id="CHEBI:57955"/>
        <dbReference type="ChEBI" id="CHEBI:58349"/>
        <dbReference type="ChEBI" id="CHEBI:61548"/>
        <dbReference type="EC" id="1.1.1.49"/>
    </reaction>
    <physiologicalReaction direction="left-to-right" evidence="3">
        <dbReference type="Rhea" id="RHEA:15842"/>
    </physiologicalReaction>
</comment>
<comment type="pathway">
    <text evidence="5">Carbohydrate degradation; pentose phosphate pathway; D-ribulose 5-phosphate from D-glucose 6-phosphate (oxidative stage): step 1/3.</text>
</comment>
<comment type="disruption phenotype">
    <text evidence="3">Leads to slow growth on glucose (PubMed:38397078). Confers methionine auxotrophy and hypersensitivity towards hydrogen peroxide and sulfite (PubMed:38397078).</text>
</comment>
<comment type="similarity">
    <text evidence="3">Belongs to the glucose-6-phosphate dehydrogenase family.</text>
</comment>
<evidence type="ECO:0000250" key="1">
    <source>
        <dbReference type="UniProtKB" id="P11411"/>
    </source>
</evidence>
<evidence type="ECO:0000250" key="2">
    <source>
        <dbReference type="UniProtKB" id="P11413"/>
    </source>
</evidence>
<evidence type="ECO:0000269" key="3">
    <source>
    </source>
</evidence>
<evidence type="ECO:0000303" key="4">
    <source>
    </source>
</evidence>
<evidence type="ECO:0000305" key="5">
    <source>
    </source>
</evidence>
<proteinExistence type="inferred from homology"/>
<keyword id="KW-0119">Carbohydrate metabolism</keyword>
<keyword id="KW-0313">Glucose metabolism</keyword>
<keyword id="KW-0521">NADP</keyword>
<keyword id="KW-0560">Oxidoreductase</keyword>
<keyword id="KW-1185">Reference proteome</keyword>
<organism>
    <name type="scientific">Hanseniaspora uvarum</name>
    <name type="common">Yeast</name>
    <name type="synonym">Kloeckera apiculata</name>
    <dbReference type="NCBI Taxonomy" id="29833"/>
    <lineage>
        <taxon>Eukaryota</taxon>
        <taxon>Fungi</taxon>
        <taxon>Dikarya</taxon>
        <taxon>Ascomycota</taxon>
        <taxon>Saccharomycotina</taxon>
        <taxon>Saccharomycetes</taxon>
        <taxon>Saccharomycodales</taxon>
        <taxon>Saccharomycodaceae</taxon>
        <taxon>Hanseniaspora</taxon>
    </lineage>
</organism>
<feature type="chain" id="PRO_0000460612" description="Glucose-6-phosphate 1-dehydrogenase">
    <location>
        <begin position="1"/>
        <end position="503"/>
    </location>
</feature>
<feature type="active site" description="Proton acceptor" evidence="1">
    <location>
        <position position="250"/>
    </location>
</feature>
<feature type="binding site" evidence="2">
    <location>
        <begin position="14"/>
        <end position="21"/>
    </location>
    <ligand>
        <name>NADP(+)</name>
        <dbReference type="ChEBI" id="CHEBI:58349"/>
        <label>1</label>
    </ligand>
</feature>
<feature type="binding site" evidence="2">
    <location>
        <begin position="14"/>
        <end position="21"/>
    </location>
    <ligand>
        <name>NADP(+)</name>
        <dbReference type="ChEBI" id="CHEBI:58349"/>
    </ligand>
</feature>
<feature type="binding site" evidence="2">
    <location>
        <position position="49"/>
    </location>
    <ligand>
        <name>NADP(+)</name>
        <dbReference type="ChEBI" id="CHEBI:58349"/>
        <label>1</label>
    </ligand>
</feature>
<feature type="binding site" evidence="2">
    <location>
        <position position="49"/>
    </location>
    <ligand>
        <name>NADP(+)</name>
        <dbReference type="ChEBI" id="CHEBI:58349"/>
    </ligand>
</feature>
<feature type="binding site" evidence="2">
    <location>
        <position position="158"/>
    </location>
    <ligand>
        <name>D-glucose 6-phosphate</name>
        <dbReference type="ChEBI" id="CHEBI:61548"/>
    </ligand>
</feature>
<feature type="binding site" evidence="2">
    <location>
        <position position="158"/>
    </location>
    <ligand>
        <name>NADP(+)</name>
        <dbReference type="ChEBI" id="CHEBI:58349"/>
        <label>1</label>
    </ligand>
</feature>
<feature type="binding site" evidence="2">
    <location>
        <position position="158"/>
    </location>
    <ligand>
        <name>NADP(+)</name>
        <dbReference type="ChEBI" id="CHEBI:58349"/>
    </ligand>
</feature>
<feature type="binding site" evidence="2">
    <location>
        <begin position="188"/>
        <end position="192"/>
    </location>
    <ligand>
        <name>D-glucose 6-phosphate</name>
        <dbReference type="ChEBI" id="CHEBI:61548"/>
    </ligand>
</feature>
<feature type="binding site" evidence="2">
    <location>
        <position position="226"/>
    </location>
    <ligand>
        <name>D-glucose 6-phosphate</name>
        <dbReference type="ChEBI" id="CHEBI:61548"/>
    </ligand>
</feature>
<feature type="binding site" evidence="2">
    <location>
        <position position="245"/>
    </location>
    <ligand>
        <name>D-glucose 6-phosphate</name>
        <dbReference type="ChEBI" id="CHEBI:61548"/>
    </ligand>
</feature>
<feature type="binding site" evidence="2">
    <location>
        <position position="341"/>
    </location>
    <ligand>
        <name>NADP(+)</name>
        <dbReference type="ChEBI" id="CHEBI:58349"/>
        <label>2</label>
    </ligand>
</feature>
<feature type="binding site" evidence="2">
    <location>
        <position position="344"/>
    </location>
    <ligand>
        <name>D-glucose 6-phosphate</name>
        <dbReference type="ChEBI" id="CHEBI:61548"/>
    </ligand>
</feature>
<feature type="binding site" evidence="2">
    <location>
        <position position="350"/>
    </location>
    <ligand>
        <name>NADP(+)</name>
        <dbReference type="ChEBI" id="CHEBI:58349"/>
        <label>2</label>
    </ligand>
</feature>
<feature type="binding site" evidence="2">
    <location>
        <position position="354"/>
    </location>
    <ligand>
        <name>NADP(+)</name>
        <dbReference type="ChEBI" id="CHEBI:58349"/>
        <label>2</label>
    </ligand>
</feature>
<feature type="binding site" evidence="2">
    <location>
        <position position="376"/>
    </location>
    <ligand>
        <name>NADP(+)</name>
        <dbReference type="ChEBI" id="CHEBI:58349"/>
        <label>2</label>
    </ligand>
</feature>
<feature type="binding site" evidence="2">
    <location>
        <position position="378"/>
    </location>
    <ligand>
        <name>D-glucose 6-phosphate</name>
        <dbReference type="ChEBI" id="CHEBI:61548"/>
    </ligand>
</feature>
<feature type="binding site" evidence="2">
    <location>
        <begin position="384"/>
        <end position="386"/>
    </location>
    <ligand>
        <name>NADP(+)</name>
        <dbReference type="ChEBI" id="CHEBI:58349"/>
        <label>2</label>
    </ligand>
</feature>
<feature type="binding site" evidence="2">
    <location>
        <position position="471"/>
    </location>
    <ligand>
        <name>NADP(+)</name>
        <dbReference type="ChEBI" id="CHEBI:58349"/>
        <label>2</label>
    </ligand>
</feature>
<feature type="binding site" evidence="2">
    <location>
        <position position="487"/>
    </location>
    <ligand>
        <name>NADP(+)</name>
        <dbReference type="ChEBI" id="CHEBI:58349"/>
        <label>2</label>
    </ligand>
</feature>
<reference key="1">
    <citation type="journal article" date="2016" name="Genome Announc.">
        <title>Genome sequences of three species of Hanseniaspora isolated from spontaneous wine fermentations.</title>
        <authorList>
            <person name="Sternes P.R."/>
            <person name="Lee D."/>
            <person name="Kutyna D.R."/>
            <person name="Borneman A.R."/>
        </authorList>
    </citation>
    <scope>NUCLEOTIDE SEQUENCE [LARGE SCALE GENOMIC DNA]</scope>
    <source>
        <strain>AWRI3580</strain>
    </source>
</reference>
<reference key="2">
    <citation type="journal article" date="2024" name="Int. J. Mol. Sci.">
        <title>The role of glucose-6-phosphate dehydrogenase in the wine yeast Hanseniaspora uvarum.</title>
        <authorList>
            <person name="Heinisch J.J."/>
            <person name="Murra A."/>
            <person name="Fernandez Murillo L."/>
            <person name="Schmitz H.P."/>
        </authorList>
    </citation>
    <scope>FUNCTION</scope>
    <scope>DISRUPTION PHENOTYPE</scope>
</reference>
<protein>
    <recommendedName>
        <fullName evidence="4">Glucose-6-phosphate 1-dehydrogenase</fullName>
        <shortName evidence="4">G6PDH</shortName>
        <ecNumber evidence="3">1.1.1.49</ecNumber>
    </recommendedName>
    <alternativeName>
        <fullName evidence="4">Zwischenferment protein 1</fullName>
    </alternativeName>
</protein>
<sequence>MTDKLSKYIITVFGASGDLSKKKTFPAIFGLFKQGEISKDECKIVGYARSKMNDEELRDRLKPFLLKQVSKESNGEKIVDEFLSNVTYVQGPYDTDEGYQKLGEAYKEIEKSLNKGSPVNKLHYLALPPSVFGSVCEKIKNNIYVNEDDAKTKIIVEKPFGHDLESSRQLQKELAPLFTEDELYRIDHYLGKEMVKNLLILRFGNILFNSAWNKENIQNIQITFKEPFGTEGRGGYFNDIGIIRDVMQNHLLQVLTLLTMERPVTFDSEAVRDEKVKVLKAIAPIDHDDIIIGQYGKSXDGSKPSYLDDETVPEGSKCITFAAMNFQIRNERWDGVPIVMKAGKALDVGKVEIRIQFKPVASGMFSQIPNNELVIRIQPDEAVYLKCNMKTPGLSTTTKITDLNLTYADRYEDFWIPQAYEALIRDALIGDHSNFVRDDELDVSWALFTPLLDYLEGENAPEPTIYAYGSRGPVELNXYMHXHNYKYMHGDIYQWPVTRPDSE</sequence>
<dbReference type="EC" id="1.1.1.49" evidence="3"/>
<dbReference type="EMBL" id="LPNN01000001">
    <property type="protein sequence ID" value="OEJ92934.1"/>
    <property type="molecule type" value="Genomic_DNA"/>
</dbReference>
<dbReference type="STRING" id="29833.A0A1E5S1A9"/>
<dbReference type="VEuPathDB" id="FungiDB:AWRI3580_g7"/>
<dbReference type="OrthoDB" id="60984at2759"/>
<dbReference type="UniPathway" id="UPA00115">
    <property type="reaction ID" value="UER00408"/>
</dbReference>
<dbReference type="Proteomes" id="UP000095358">
    <property type="component" value="Unassembled WGS sequence"/>
</dbReference>
<dbReference type="GO" id="GO:0005829">
    <property type="term" value="C:cytosol"/>
    <property type="evidence" value="ECO:0007669"/>
    <property type="project" value="TreeGrafter"/>
</dbReference>
<dbReference type="GO" id="GO:0004345">
    <property type="term" value="F:glucose-6-phosphate dehydrogenase activity"/>
    <property type="evidence" value="ECO:0007669"/>
    <property type="project" value="UniProtKB-EC"/>
</dbReference>
<dbReference type="GO" id="GO:0050661">
    <property type="term" value="F:NADP binding"/>
    <property type="evidence" value="ECO:0007669"/>
    <property type="project" value="InterPro"/>
</dbReference>
<dbReference type="GO" id="GO:0006006">
    <property type="term" value="P:glucose metabolic process"/>
    <property type="evidence" value="ECO:0007669"/>
    <property type="project" value="UniProtKB-KW"/>
</dbReference>
<dbReference type="GO" id="GO:0009051">
    <property type="term" value="P:pentose-phosphate shunt, oxidative branch"/>
    <property type="evidence" value="ECO:0007669"/>
    <property type="project" value="TreeGrafter"/>
</dbReference>
<dbReference type="FunFam" id="3.30.360.10:FF:000015">
    <property type="entry name" value="Glucose-6-phosphate 1-dehydrogenase"/>
    <property type="match status" value="1"/>
</dbReference>
<dbReference type="Gene3D" id="3.30.360.10">
    <property type="entry name" value="Dihydrodipicolinate Reductase, domain 2"/>
    <property type="match status" value="1"/>
</dbReference>
<dbReference type="Gene3D" id="3.40.50.720">
    <property type="entry name" value="NAD(P)-binding Rossmann-like Domain"/>
    <property type="match status" value="1"/>
</dbReference>
<dbReference type="HAMAP" id="MF_00966">
    <property type="entry name" value="G6PD"/>
    <property type="match status" value="1"/>
</dbReference>
<dbReference type="InterPro" id="IPR001282">
    <property type="entry name" value="G6P_DH"/>
</dbReference>
<dbReference type="InterPro" id="IPR019796">
    <property type="entry name" value="G6P_DH_AS"/>
</dbReference>
<dbReference type="InterPro" id="IPR022675">
    <property type="entry name" value="G6P_DH_C"/>
</dbReference>
<dbReference type="InterPro" id="IPR022674">
    <property type="entry name" value="G6P_DH_NAD-bd"/>
</dbReference>
<dbReference type="InterPro" id="IPR036291">
    <property type="entry name" value="NAD(P)-bd_dom_sf"/>
</dbReference>
<dbReference type="NCBIfam" id="TIGR00871">
    <property type="entry name" value="zwf"/>
    <property type="match status" value="1"/>
</dbReference>
<dbReference type="PANTHER" id="PTHR23429:SF0">
    <property type="entry name" value="GLUCOSE-6-PHOSPHATE 1-DEHYDROGENASE"/>
    <property type="match status" value="1"/>
</dbReference>
<dbReference type="PANTHER" id="PTHR23429">
    <property type="entry name" value="GLUCOSE-6-PHOSPHATE 1-DEHYDROGENASE G6PD"/>
    <property type="match status" value="1"/>
</dbReference>
<dbReference type="Pfam" id="PF02781">
    <property type="entry name" value="G6PD_C"/>
    <property type="match status" value="1"/>
</dbReference>
<dbReference type="Pfam" id="PF00479">
    <property type="entry name" value="G6PD_N"/>
    <property type="match status" value="1"/>
</dbReference>
<dbReference type="PIRSF" id="PIRSF000110">
    <property type="entry name" value="G6PD"/>
    <property type="match status" value="1"/>
</dbReference>
<dbReference type="PRINTS" id="PR00079">
    <property type="entry name" value="G6PDHDRGNASE"/>
</dbReference>
<dbReference type="SUPFAM" id="SSF55347">
    <property type="entry name" value="Glyceraldehyde-3-phosphate dehydrogenase-like, C-terminal domain"/>
    <property type="match status" value="1"/>
</dbReference>
<dbReference type="SUPFAM" id="SSF51735">
    <property type="entry name" value="NAD(P)-binding Rossmann-fold domains"/>
    <property type="match status" value="1"/>
</dbReference>
<dbReference type="PROSITE" id="PS00069">
    <property type="entry name" value="G6P_DEHYDROGENASE"/>
    <property type="match status" value="1"/>
</dbReference>
<name>G6PD_HANUV</name>
<accession>A0A1E5S1A9</accession>